<evidence type="ECO:0000255" key="1">
    <source>
        <dbReference type="HAMAP-Rule" id="MF_01547"/>
    </source>
</evidence>
<evidence type="ECO:0000305" key="2"/>
<proteinExistence type="inferred from homology"/>
<comment type="function">
    <text evidence="1">Specifically methylates the uridine in position 2552 of 23S rRNA at the 2'-O position of the ribose in the fully assembled 50S ribosomal subunit.</text>
</comment>
<comment type="catalytic activity">
    <reaction evidence="1">
        <text>uridine(2552) in 23S rRNA + S-adenosyl-L-methionine = 2'-O-methyluridine(2552) in 23S rRNA + S-adenosyl-L-homocysteine + H(+)</text>
        <dbReference type="Rhea" id="RHEA:42720"/>
        <dbReference type="Rhea" id="RHEA-COMP:10202"/>
        <dbReference type="Rhea" id="RHEA-COMP:10203"/>
        <dbReference type="ChEBI" id="CHEBI:15378"/>
        <dbReference type="ChEBI" id="CHEBI:57856"/>
        <dbReference type="ChEBI" id="CHEBI:59789"/>
        <dbReference type="ChEBI" id="CHEBI:65315"/>
        <dbReference type="ChEBI" id="CHEBI:74478"/>
        <dbReference type="EC" id="2.1.1.166"/>
    </reaction>
</comment>
<comment type="subcellular location">
    <subcellularLocation>
        <location evidence="1">Cytoplasm</location>
    </subcellularLocation>
</comment>
<comment type="similarity">
    <text evidence="1">Belongs to the class I-like SAM-binding methyltransferase superfamily. RNA methyltransferase RlmE family.</text>
</comment>
<comment type="sequence caution" evidence="2">
    <conflict type="erroneous initiation">
        <sequence resource="EMBL-CDS" id="ABU78781"/>
    </conflict>
</comment>
<feature type="chain" id="PRO_0000333322" description="Ribosomal RNA large subunit methyltransferase E">
    <location>
        <begin position="1"/>
        <end position="209"/>
    </location>
</feature>
<feature type="active site" description="Proton acceptor" evidence="1">
    <location>
        <position position="164"/>
    </location>
</feature>
<feature type="binding site" evidence="1">
    <location>
        <position position="63"/>
    </location>
    <ligand>
        <name>S-adenosyl-L-methionine</name>
        <dbReference type="ChEBI" id="CHEBI:59789"/>
    </ligand>
</feature>
<feature type="binding site" evidence="1">
    <location>
        <position position="65"/>
    </location>
    <ligand>
        <name>S-adenosyl-L-methionine</name>
        <dbReference type="ChEBI" id="CHEBI:59789"/>
    </ligand>
</feature>
<feature type="binding site" evidence="1">
    <location>
        <position position="83"/>
    </location>
    <ligand>
        <name>S-adenosyl-L-methionine</name>
        <dbReference type="ChEBI" id="CHEBI:59789"/>
    </ligand>
</feature>
<feature type="binding site" evidence="1">
    <location>
        <position position="99"/>
    </location>
    <ligand>
        <name>S-adenosyl-L-methionine</name>
        <dbReference type="ChEBI" id="CHEBI:59789"/>
    </ligand>
</feature>
<feature type="binding site" evidence="1">
    <location>
        <position position="124"/>
    </location>
    <ligand>
        <name>S-adenosyl-L-methionine</name>
        <dbReference type="ChEBI" id="CHEBI:59789"/>
    </ligand>
</feature>
<dbReference type="EC" id="2.1.1.166" evidence="1"/>
<dbReference type="EMBL" id="CP000783">
    <property type="protein sequence ID" value="ABU78781.1"/>
    <property type="status" value="ALT_INIT"/>
    <property type="molecule type" value="Genomic_DNA"/>
</dbReference>
<dbReference type="RefSeq" id="WP_004385066.1">
    <property type="nucleotide sequence ID" value="NC_009778.1"/>
</dbReference>
<dbReference type="SMR" id="A7MIM8"/>
<dbReference type="GeneID" id="92807986"/>
<dbReference type="KEGG" id="esa:ESA_03570"/>
<dbReference type="HOGENOM" id="CLU_009422_4_0_6"/>
<dbReference type="Proteomes" id="UP000000260">
    <property type="component" value="Chromosome"/>
</dbReference>
<dbReference type="GO" id="GO:0005737">
    <property type="term" value="C:cytoplasm"/>
    <property type="evidence" value="ECO:0007669"/>
    <property type="project" value="UniProtKB-SubCell"/>
</dbReference>
<dbReference type="GO" id="GO:0008650">
    <property type="term" value="F:rRNA (uridine-2'-O-)-methyltransferase activity"/>
    <property type="evidence" value="ECO:0007669"/>
    <property type="project" value="UniProtKB-UniRule"/>
</dbReference>
<dbReference type="CDD" id="cd02440">
    <property type="entry name" value="AdoMet_MTases"/>
    <property type="match status" value="1"/>
</dbReference>
<dbReference type="FunFam" id="3.40.50.150:FF:000005">
    <property type="entry name" value="Ribosomal RNA large subunit methyltransferase E"/>
    <property type="match status" value="1"/>
</dbReference>
<dbReference type="Gene3D" id="3.40.50.150">
    <property type="entry name" value="Vaccinia Virus protein VP39"/>
    <property type="match status" value="1"/>
</dbReference>
<dbReference type="HAMAP" id="MF_01547">
    <property type="entry name" value="RNA_methyltr_E"/>
    <property type="match status" value="1"/>
</dbReference>
<dbReference type="InterPro" id="IPR050082">
    <property type="entry name" value="RNA_methyltr_RlmE"/>
</dbReference>
<dbReference type="InterPro" id="IPR002877">
    <property type="entry name" value="RNA_MeTrfase_FtsJ_dom"/>
</dbReference>
<dbReference type="InterPro" id="IPR015507">
    <property type="entry name" value="rRNA-MeTfrase_E"/>
</dbReference>
<dbReference type="InterPro" id="IPR004512">
    <property type="entry name" value="rRNA_MeTrfase_gammaproteobac"/>
</dbReference>
<dbReference type="InterPro" id="IPR029063">
    <property type="entry name" value="SAM-dependent_MTases_sf"/>
</dbReference>
<dbReference type="NCBIfam" id="NF008390">
    <property type="entry name" value="PRK11188.1"/>
    <property type="match status" value="1"/>
</dbReference>
<dbReference type="NCBIfam" id="TIGR00438">
    <property type="entry name" value="rrmJ"/>
    <property type="match status" value="1"/>
</dbReference>
<dbReference type="PANTHER" id="PTHR10920">
    <property type="entry name" value="RIBOSOMAL RNA METHYLTRANSFERASE"/>
    <property type="match status" value="1"/>
</dbReference>
<dbReference type="PANTHER" id="PTHR10920:SF18">
    <property type="entry name" value="RRNA METHYLTRANSFERASE 2, MITOCHONDRIAL"/>
    <property type="match status" value="1"/>
</dbReference>
<dbReference type="Pfam" id="PF01728">
    <property type="entry name" value="FtsJ"/>
    <property type="match status" value="1"/>
</dbReference>
<dbReference type="PIRSF" id="PIRSF005461">
    <property type="entry name" value="23S_rRNA_mtase"/>
    <property type="match status" value="1"/>
</dbReference>
<dbReference type="SUPFAM" id="SSF53335">
    <property type="entry name" value="S-adenosyl-L-methionine-dependent methyltransferases"/>
    <property type="match status" value="1"/>
</dbReference>
<keyword id="KW-0963">Cytoplasm</keyword>
<keyword id="KW-0489">Methyltransferase</keyword>
<keyword id="KW-1185">Reference proteome</keyword>
<keyword id="KW-0698">rRNA processing</keyword>
<keyword id="KW-0949">S-adenosyl-L-methionine</keyword>
<keyword id="KW-0808">Transferase</keyword>
<name>RLME_CROS8</name>
<reference key="1">
    <citation type="journal article" date="2010" name="PLoS ONE">
        <title>Genome sequence of Cronobacter sakazakii BAA-894 and comparative genomic hybridization analysis with other Cronobacter species.</title>
        <authorList>
            <person name="Kucerova E."/>
            <person name="Clifton S.W."/>
            <person name="Xia X.Q."/>
            <person name="Long F."/>
            <person name="Porwollik S."/>
            <person name="Fulton L."/>
            <person name="Fronick C."/>
            <person name="Minx P."/>
            <person name="Kyung K."/>
            <person name="Warren W."/>
            <person name="Fulton R."/>
            <person name="Feng D."/>
            <person name="Wollam A."/>
            <person name="Shah N."/>
            <person name="Bhonagiri V."/>
            <person name="Nash W.E."/>
            <person name="Hallsworth-Pepin K."/>
            <person name="Wilson R.K."/>
            <person name="McClelland M."/>
            <person name="Forsythe S.J."/>
        </authorList>
    </citation>
    <scope>NUCLEOTIDE SEQUENCE [LARGE SCALE GENOMIC DNA]</scope>
    <source>
        <strain>ATCC BAA-894</strain>
    </source>
</reference>
<gene>
    <name evidence="1" type="primary">rlmE</name>
    <name evidence="1" type="synonym">ftsJ</name>
    <name evidence="1" type="synonym">rrmJ</name>
    <name type="ordered locus">ESA_03570</name>
</gene>
<sequence length="209" mass="23294">MTGKKRSASSSRWLQEHFSDKYVQQAQKKGLRSRAWFKLDEIQQSDKIFKPGMTVVDLGAAPGGWSQYVVTQIGGAGRIIACDLLPMDPIVGVDFLQGDFRDELVMKALLERVGDSKVQVVMSDMAPNMSGTPAVDIPRAMYLVELALEMCRDVLAPGGSFVVKVFQGEGFDEYLREIRSLFTKVKVRKPDSSRARSREVYIVATGRKL</sequence>
<accession>A7MIM8</accession>
<organism>
    <name type="scientific">Cronobacter sakazakii (strain ATCC BAA-894)</name>
    <name type="common">Enterobacter sakazakii</name>
    <dbReference type="NCBI Taxonomy" id="290339"/>
    <lineage>
        <taxon>Bacteria</taxon>
        <taxon>Pseudomonadati</taxon>
        <taxon>Pseudomonadota</taxon>
        <taxon>Gammaproteobacteria</taxon>
        <taxon>Enterobacterales</taxon>
        <taxon>Enterobacteriaceae</taxon>
        <taxon>Cronobacter</taxon>
    </lineage>
</organism>
<protein>
    <recommendedName>
        <fullName evidence="1">Ribosomal RNA large subunit methyltransferase E</fullName>
        <ecNumber evidence="1">2.1.1.166</ecNumber>
    </recommendedName>
    <alternativeName>
        <fullName evidence="1">23S rRNA Um2552 methyltransferase</fullName>
    </alternativeName>
    <alternativeName>
        <fullName evidence="1">rRNA (uridine-2'-O-)-methyltransferase</fullName>
    </alternativeName>
</protein>